<name>SYA_GEOTN</name>
<dbReference type="EC" id="6.1.1.7" evidence="1"/>
<dbReference type="EMBL" id="CP000557">
    <property type="protein sequence ID" value="ABO67834.1"/>
    <property type="status" value="ALT_INIT"/>
    <property type="molecule type" value="Genomic_DNA"/>
</dbReference>
<dbReference type="RefSeq" id="WP_041264606.1">
    <property type="nucleotide sequence ID" value="NC_009328.1"/>
</dbReference>
<dbReference type="SMR" id="A4IR80"/>
<dbReference type="KEGG" id="gtn:GTNG_2489"/>
<dbReference type="eggNOG" id="COG0013">
    <property type="taxonomic scope" value="Bacteria"/>
</dbReference>
<dbReference type="HOGENOM" id="CLU_004485_1_1_9"/>
<dbReference type="Proteomes" id="UP000001578">
    <property type="component" value="Chromosome"/>
</dbReference>
<dbReference type="GO" id="GO:0005829">
    <property type="term" value="C:cytosol"/>
    <property type="evidence" value="ECO:0007669"/>
    <property type="project" value="TreeGrafter"/>
</dbReference>
<dbReference type="GO" id="GO:0004813">
    <property type="term" value="F:alanine-tRNA ligase activity"/>
    <property type="evidence" value="ECO:0007669"/>
    <property type="project" value="UniProtKB-UniRule"/>
</dbReference>
<dbReference type="GO" id="GO:0002161">
    <property type="term" value="F:aminoacyl-tRNA deacylase activity"/>
    <property type="evidence" value="ECO:0007669"/>
    <property type="project" value="TreeGrafter"/>
</dbReference>
<dbReference type="GO" id="GO:0005524">
    <property type="term" value="F:ATP binding"/>
    <property type="evidence" value="ECO:0007669"/>
    <property type="project" value="UniProtKB-UniRule"/>
</dbReference>
<dbReference type="GO" id="GO:0140096">
    <property type="term" value="F:catalytic activity, acting on a protein"/>
    <property type="evidence" value="ECO:0007669"/>
    <property type="project" value="UniProtKB-ARBA"/>
</dbReference>
<dbReference type="GO" id="GO:0016740">
    <property type="term" value="F:transferase activity"/>
    <property type="evidence" value="ECO:0007669"/>
    <property type="project" value="UniProtKB-ARBA"/>
</dbReference>
<dbReference type="GO" id="GO:0000049">
    <property type="term" value="F:tRNA binding"/>
    <property type="evidence" value="ECO:0007669"/>
    <property type="project" value="UniProtKB-KW"/>
</dbReference>
<dbReference type="GO" id="GO:0008270">
    <property type="term" value="F:zinc ion binding"/>
    <property type="evidence" value="ECO:0007669"/>
    <property type="project" value="UniProtKB-UniRule"/>
</dbReference>
<dbReference type="GO" id="GO:0006419">
    <property type="term" value="P:alanyl-tRNA aminoacylation"/>
    <property type="evidence" value="ECO:0007669"/>
    <property type="project" value="UniProtKB-UniRule"/>
</dbReference>
<dbReference type="CDD" id="cd00673">
    <property type="entry name" value="AlaRS_core"/>
    <property type="match status" value="1"/>
</dbReference>
<dbReference type="FunFam" id="2.40.30.130:FF:000001">
    <property type="entry name" value="Alanine--tRNA ligase"/>
    <property type="match status" value="1"/>
</dbReference>
<dbReference type="FunFam" id="3.10.310.40:FF:000001">
    <property type="entry name" value="Alanine--tRNA ligase"/>
    <property type="match status" value="1"/>
</dbReference>
<dbReference type="FunFam" id="3.30.54.20:FF:000001">
    <property type="entry name" value="Alanine--tRNA ligase"/>
    <property type="match status" value="1"/>
</dbReference>
<dbReference type="FunFam" id="3.30.930.10:FF:000046">
    <property type="entry name" value="Alanine--tRNA ligase"/>
    <property type="match status" value="1"/>
</dbReference>
<dbReference type="FunFam" id="3.30.980.10:FF:000004">
    <property type="entry name" value="Alanine--tRNA ligase, cytoplasmic"/>
    <property type="match status" value="1"/>
</dbReference>
<dbReference type="Gene3D" id="2.40.30.130">
    <property type="match status" value="1"/>
</dbReference>
<dbReference type="Gene3D" id="3.10.310.40">
    <property type="match status" value="1"/>
</dbReference>
<dbReference type="Gene3D" id="3.30.54.20">
    <property type="match status" value="1"/>
</dbReference>
<dbReference type="Gene3D" id="6.10.250.550">
    <property type="match status" value="1"/>
</dbReference>
<dbReference type="Gene3D" id="3.30.930.10">
    <property type="entry name" value="Bira Bifunctional Protein, Domain 2"/>
    <property type="match status" value="1"/>
</dbReference>
<dbReference type="Gene3D" id="3.30.980.10">
    <property type="entry name" value="Threonyl-trna Synthetase, Chain A, domain 2"/>
    <property type="match status" value="1"/>
</dbReference>
<dbReference type="HAMAP" id="MF_00036_B">
    <property type="entry name" value="Ala_tRNA_synth_B"/>
    <property type="match status" value="1"/>
</dbReference>
<dbReference type="InterPro" id="IPR045864">
    <property type="entry name" value="aa-tRNA-synth_II/BPL/LPL"/>
</dbReference>
<dbReference type="InterPro" id="IPR002318">
    <property type="entry name" value="Ala-tRNA-lgiase_IIc"/>
</dbReference>
<dbReference type="InterPro" id="IPR018162">
    <property type="entry name" value="Ala-tRNA-ligase_IIc_anticod-bd"/>
</dbReference>
<dbReference type="InterPro" id="IPR018165">
    <property type="entry name" value="Ala-tRNA-synth_IIc_core"/>
</dbReference>
<dbReference type="InterPro" id="IPR018164">
    <property type="entry name" value="Ala-tRNA-synth_IIc_N"/>
</dbReference>
<dbReference type="InterPro" id="IPR050058">
    <property type="entry name" value="Ala-tRNA_ligase"/>
</dbReference>
<dbReference type="InterPro" id="IPR023033">
    <property type="entry name" value="Ala_tRNA_ligase_euk/bac"/>
</dbReference>
<dbReference type="InterPro" id="IPR003156">
    <property type="entry name" value="DHHA1_dom"/>
</dbReference>
<dbReference type="InterPro" id="IPR018163">
    <property type="entry name" value="Thr/Ala-tRNA-synth_IIc_edit"/>
</dbReference>
<dbReference type="InterPro" id="IPR009000">
    <property type="entry name" value="Transl_B-barrel_sf"/>
</dbReference>
<dbReference type="InterPro" id="IPR012947">
    <property type="entry name" value="tRNA_SAD"/>
</dbReference>
<dbReference type="NCBIfam" id="TIGR00344">
    <property type="entry name" value="alaS"/>
    <property type="match status" value="1"/>
</dbReference>
<dbReference type="PANTHER" id="PTHR11777:SF9">
    <property type="entry name" value="ALANINE--TRNA LIGASE, CYTOPLASMIC"/>
    <property type="match status" value="1"/>
</dbReference>
<dbReference type="PANTHER" id="PTHR11777">
    <property type="entry name" value="ALANYL-TRNA SYNTHETASE"/>
    <property type="match status" value="1"/>
</dbReference>
<dbReference type="Pfam" id="PF02272">
    <property type="entry name" value="DHHA1"/>
    <property type="match status" value="1"/>
</dbReference>
<dbReference type="Pfam" id="PF01411">
    <property type="entry name" value="tRNA-synt_2c"/>
    <property type="match status" value="1"/>
</dbReference>
<dbReference type="Pfam" id="PF07973">
    <property type="entry name" value="tRNA_SAD"/>
    <property type="match status" value="1"/>
</dbReference>
<dbReference type="PRINTS" id="PR00980">
    <property type="entry name" value="TRNASYNTHALA"/>
</dbReference>
<dbReference type="SMART" id="SM00863">
    <property type="entry name" value="tRNA_SAD"/>
    <property type="match status" value="1"/>
</dbReference>
<dbReference type="SUPFAM" id="SSF55681">
    <property type="entry name" value="Class II aaRS and biotin synthetases"/>
    <property type="match status" value="1"/>
</dbReference>
<dbReference type="SUPFAM" id="SSF101353">
    <property type="entry name" value="Putative anticodon-binding domain of alanyl-tRNA synthetase (AlaRS)"/>
    <property type="match status" value="1"/>
</dbReference>
<dbReference type="SUPFAM" id="SSF55186">
    <property type="entry name" value="ThrRS/AlaRS common domain"/>
    <property type="match status" value="1"/>
</dbReference>
<dbReference type="SUPFAM" id="SSF50447">
    <property type="entry name" value="Translation proteins"/>
    <property type="match status" value="1"/>
</dbReference>
<dbReference type="PROSITE" id="PS50860">
    <property type="entry name" value="AA_TRNA_LIGASE_II_ALA"/>
    <property type="match status" value="1"/>
</dbReference>
<reference key="1">
    <citation type="journal article" date="2007" name="Proc. Natl. Acad. Sci. U.S.A.">
        <title>Genome and proteome of long-chain alkane degrading Geobacillus thermodenitrificans NG80-2 isolated from a deep-subsurface oil reservoir.</title>
        <authorList>
            <person name="Feng L."/>
            <person name="Wang W."/>
            <person name="Cheng J."/>
            <person name="Ren Y."/>
            <person name="Zhao G."/>
            <person name="Gao C."/>
            <person name="Tang Y."/>
            <person name="Liu X."/>
            <person name="Han W."/>
            <person name="Peng X."/>
            <person name="Liu R."/>
            <person name="Wang L."/>
        </authorList>
    </citation>
    <scope>NUCLEOTIDE SEQUENCE [LARGE SCALE GENOMIC DNA]</scope>
    <source>
        <strain>NG80-2</strain>
    </source>
</reference>
<organism>
    <name type="scientific">Geobacillus thermodenitrificans (strain NG80-2)</name>
    <dbReference type="NCBI Taxonomy" id="420246"/>
    <lineage>
        <taxon>Bacteria</taxon>
        <taxon>Bacillati</taxon>
        <taxon>Bacillota</taxon>
        <taxon>Bacilli</taxon>
        <taxon>Bacillales</taxon>
        <taxon>Anoxybacillaceae</taxon>
        <taxon>Geobacillus</taxon>
    </lineage>
</organism>
<comment type="function">
    <text evidence="1">Catalyzes the attachment of alanine to tRNA(Ala) in a two-step reaction: alanine is first activated by ATP to form Ala-AMP and then transferred to the acceptor end of tRNA(Ala). Also edits incorrectly charged Ser-tRNA(Ala) and Gly-tRNA(Ala) via its editing domain.</text>
</comment>
<comment type="catalytic activity">
    <reaction evidence="1">
        <text>tRNA(Ala) + L-alanine + ATP = L-alanyl-tRNA(Ala) + AMP + diphosphate</text>
        <dbReference type="Rhea" id="RHEA:12540"/>
        <dbReference type="Rhea" id="RHEA-COMP:9657"/>
        <dbReference type="Rhea" id="RHEA-COMP:9923"/>
        <dbReference type="ChEBI" id="CHEBI:30616"/>
        <dbReference type="ChEBI" id="CHEBI:33019"/>
        <dbReference type="ChEBI" id="CHEBI:57972"/>
        <dbReference type="ChEBI" id="CHEBI:78442"/>
        <dbReference type="ChEBI" id="CHEBI:78497"/>
        <dbReference type="ChEBI" id="CHEBI:456215"/>
        <dbReference type="EC" id="6.1.1.7"/>
    </reaction>
</comment>
<comment type="cofactor">
    <cofactor evidence="1">
        <name>Zn(2+)</name>
        <dbReference type="ChEBI" id="CHEBI:29105"/>
    </cofactor>
    <text evidence="1">Binds 1 zinc ion per subunit.</text>
</comment>
<comment type="subcellular location">
    <subcellularLocation>
        <location evidence="1">Cytoplasm</location>
    </subcellularLocation>
</comment>
<comment type="domain">
    <text evidence="1">Consists of three domains; the N-terminal catalytic domain, the editing domain and the C-terminal C-Ala domain. The editing domain removes incorrectly charged amino acids, while the C-Ala domain, along with tRNA(Ala), serves as a bridge to cooperatively bring together the editing and aminoacylation centers thus stimulating deacylation of misacylated tRNAs.</text>
</comment>
<comment type="similarity">
    <text evidence="1">Belongs to the class-II aminoacyl-tRNA synthetase family.</text>
</comment>
<comment type="sequence caution" evidence="2">
    <conflict type="erroneous initiation">
        <sequence resource="EMBL-CDS" id="ABO67834"/>
    </conflict>
</comment>
<gene>
    <name evidence="1" type="primary">alaS</name>
    <name type="ordered locus">GTNG_2489</name>
</gene>
<evidence type="ECO:0000255" key="1">
    <source>
        <dbReference type="HAMAP-Rule" id="MF_00036"/>
    </source>
</evidence>
<evidence type="ECO:0000305" key="2"/>
<accession>A4IR80</accession>
<feature type="chain" id="PRO_0000347620" description="Alanine--tRNA ligase">
    <location>
        <begin position="1"/>
        <end position="878"/>
    </location>
</feature>
<feature type="binding site" evidence="1">
    <location>
        <position position="566"/>
    </location>
    <ligand>
        <name>Zn(2+)</name>
        <dbReference type="ChEBI" id="CHEBI:29105"/>
    </ligand>
</feature>
<feature type="binding site" evidence="1">
    <location>
        <position position="570"/>
    </location>
    <ligand>
        <name>Zn(2+)</name>
        <dbReference type="ChEBI" id="CHEBI:29105"/>
    </ligand>
</feature>
<feature type="binding site" evidence="1">
    <location>
        <position position="668"/>
    </location>
    <ligand>
        <name>Zn(2+)</name>
        <dbReference type="ChEBI" id="CHEBI:29105"/>
    </ligand>
</feature>
<feature type="binding site" evidence="1">
    <location>
        <position position="672"/>
    </location>
    <ligand>
        <name>Zn(2+)</name>
        <dbReference type="ChEBI" id="CHEBI:29105"/>
    </ligand>
</feature>
<sequence>MKKLTSAEVRRMFLQFFQEKGHAVEPSASLIPVDDPSLLWINSGVATLKKYFDGRIIPDNPRICNAQKSIRTNDIENVGKTARHHTFFEMLGNFSIGDYFKREAIHWAWEFLTSEKWIGFDPERLSVTVHPEDEEAYNIWRNEIGLPEERIIRLEGKFWDIGEGPSGPNTEIFYDRGEAFGNDPNDPELYPGGENDRYLEVWNLVFSQFNHNPDGTYTPLPKKNIDTGMGLERMCSILQDVPTNFETDLFMPIIRATEQIAGEQYGKDPNKDVAFKVIADHIRAVTFAVGDGALPSNEGRGYVLRRLLRRAVRYAKQIGIDRPFMYELVPVVGEIMQDYYPEVKEKADFIARVIRTEEERFHETLHEGLAILAEVMEKAKKQGSTVIPGEEAFRLYDTYGFPLELTEEYAAEAGMSVDHAGFEREMERQRERARAARQDVDSMQVQGGVLGDIKDESRFVGYDELVVSSTVIAIIKDGQPVEEVGTGEEAQIIVDVTPFYAESGGQIADQGVFEGETGTAVVKDVQKAPNGQHLHSIVVERGAVKKGDRYTARVDEVKRSQIVKNHTATHLLHQALKDVLGRHVNQAGSLVAPDRLRFDFTHFGQVKPDELERIEAIVNEQIWKSIPVDIFYKPLEEAKAMGAMALFGEKYGDIVRVVKVGDYSLELCGGCHVPNTAAIGLFKIVSESGIGAGTRRIEAVTGEAAYRFMSEQLALLQEAAQKLKTSPRELNARLDGLFAELRQLQRENESLAARLAHMEAEHLTRQVKEVGGVPVLAAKVQANDMNQLRAMADDLKQKLGTAVIVLAAVQGGKVQLIAAVTDDLVKKGYHAGKLVKEVASRCGGGGGGRPDMAQAGGKDANKVGEALDYVETWVKSIS</sequence>
<proteinExistence type="inferred from homology"/>
<keyword id="KW-0030">Aminoacyl-tRNA synthetase</keyword>
<keyword id="KW-0067">ATP-binding</keyword>
<keyword id="KW-0963">Cytoplasm</keyword>
<keyword id="KW-0436">Ligase</keyword>
<keyword id="KW-0479">Metal-binding</keyword>
<keyword id="KW-0547">Nucleotide-binding</keyword>
<keyword id="KW-0648">Protein biosynthesis</keyword>
<keyword id="KW-0694">RNA-binding</keyword>
<keyword id="KW-0820">tRNA-binding</keyword>
<keyword id="KW-0862">Zinc</keyword>
<protein>
    <recommendedName>
        <fullName evidence="1">Alanine--tRNA ligase</fullName>
        <ecNumber evidence="1">6.1.1.7</ecNumber>
    </recommendedName>
    <alternativeName>
        <fullName evidence="1">Alanyl-tRNA synthetase</fullName>
        <shortName evidence="1">AlaRS</shortName>
    </alternativeName>
</protein>